<reference key="1">
    <citation type="journal article" date="2007" name="Nat. Biotechnol.">
        <title>Genome sequencing and analysis of the versatile cell factory Aspergillus niger CBS 513.88.</title>
        <authorList>
            <person name="Pel H.J."/>
            <person name="de Winde J.H."/>
            <person name="Archer D.B."/>
            <person name="Dyer P.S."/>
            <person name="Hofmann G."/>
            <person name="Schaap P.J."/>
            <person name="Turner G."/>
            <person name="de Vries R.P."/>
            <person name="Albang R."/>
            <person name="Albermann K."/>
            <person name="Andersen M.R."/>
            <person name="Bendtsen J.D."/>
            <person name="Benen J.A.E."/>
            <person name="van den Berg M."/>
            <person name="Breestraat S."/>
            <person name="Caddick M.X."/>
            <person name="Contreras R."/>
            <person name="Cornell M."/>
            <person name="Coutinho P.M."/>
            <person name="Danchin E.G.J."/>
            <person name="Debets A.J.M."/>
            <person name="Dekker P."/>
            <person name="van Dijck P.W.M."/>
            <person name="van Dijk A."/>
            <person name="Dijkhuizen L."/>
            <person name="Driessen A.J.M."/>
            <person name="d'Enfert C."/>
            <person name="Geysens S."/>
            <person name="Goosen C."/>
            <person name="Groot G.S.P."/>
            <person name="de Groot P.W.J."/>
            <person name="Guillemette T."/>
            <person name="Henrissat B."/>
            <person name="Herweijer M."/>
            <person name="van den Hombergh J.P.T.W."/>
            <person name="van den Hondel C.A.M.J.J."/>
            <person name="van der Heijden R.T.J.M."/>
            <person name="van der Kaaij R.M."/>
            <person name="Klis F.M."/>
            <person name="Kools H.J."/>
            <person name="Kubicek C.P."/>
            <person name="van Kuyk P.A."/>
            <person name="Lauber J."/>
            <person name="Lu X."/>
            <person name="van der Maarel M.J.E.C."/>
            <person name="Meulenberg R."/>
            <person name="Menke H."/>
            <person name="Mortimer M.A."/>
            <person name="Nielsen J."/>
            <person name="Oliver S.G."/>
            <person name="Olsthoorn M."/>
            <person name="Pal K."/>
            <person name="van Peij N.N.M.E."/>
            <person name="Ram A.F.J."/>
            <person name="Rinas U."/>
            <person name="Roubos J.A."/>
            <person name="Sagt C.M.J."/>
            <person name="Schmoll M."/>
            <person name="Sun J."/>
            <person name="Ussery D."/>
            <person name="Varga J."/>
            <person name="Vervecken W."/>
            <person name="van de Vondervoort P.J.J."/>
            <person name="Wedler H."/>
            <person name="Woesten H.A.B."/>
            <person name="Zeng A.-P."/>
            <person name="van Ooyen A.J.J."/>
            <person name="Visser J."/>
            <person name="Stam H."/>
        </authorList>
    </citation>
    <scope>NUCLEOTIDE SEQUENCE [LARGE SCALE GENOMIC DNA]</scope>
    <source>
        <strain>ATCC MYA-4892 / CBS 513.88 / FGSC A1513</strain>
    </source>
</reference>
<gene>
    <name type="primary">chl1</name>
    <name type="ORF">An11g11040</name>
</gene>
<evidence type="ECO:0000250" key="1">
    <source>
        <dbReference type="UniProtKB" id="P18074"/>
    </source>
</evidence>
<evidence type="ECO:0000250" key="2">
    <source>
        <dbReference type="UniProtKB" id="P22516"/>
    </source>
</evidence>
<evidence type="ECO:0000250" key="3">
    <source>
        <dbReference type="UniProtKB" id="Q96FC9"/>
    </source>
</evidence>
<evidence type="ECO:0000255" key="4">
    <source>
        <dbReference type="PROSITE-ProRule" id="PRU00541"/>
    </source>
</evidence>
<evidence type="ECO:0000256" key="5">
    <source>
        <dbReference type="SAM" id="MobiDB-lite"/>
    </source>
</evidence>
<evidence type="ECO:0000305" key="6"/>
<keyword id="KW-0067">ATP-binding</keyword>
<keyword id="KW-0131">Cell cycle</keyword>
<keyword id="KW-0238">DNA-binding</keyword>
<keyword id="KW-0347">Helicase</keyword>
<keyword id="KW-0378">Hydrolase</keyword>
<keyword id="KW-0408">Iron</keyword>
<keyword id="KW-0411">Iron-sulfur</keyword>
<keyword id="KW-0413">Isomerase</keyword>
<keyword id="KW-0479">Metal-binding</keyword>
<keyword id="KW-0547">Nucleotide-binding</keyword>
<keyword id="KW-0539">Nucleus</keyword>
<keyword id="KW-1185">Reference proteome</keyword>
<sequence length="874" mass="98373">MELQRNDFHHPYSPYDIQLQLMRALYSCLEQGKVAVFESPTGTGKSLSLICGSLTWLRDHKRSAFQTAVDNATCDDDEPEWMLDFARRESSRMMTEKRKELEERLEKTRKEEEQQRIALENPEGPRKKQKYSIPLTESGGLSEDQFALDDYDSENEEHSKPRDELAHTSELSPSTLELLERFKGQISTAKPGSDDADNDEVKIFYCSRTHSQLTQFAGELRRVKMPWSIPKDLLSTDLTGEEELEERVKHVTLGSRKNLCINPRVSSLENATAINERCLDLQQPNVNPQHRCPFLPSKEDERQVLQFRDHALSTVKDIEDLGKLGKKIGICPYYASRSVVKDSEVCCLRARSSIDLVPDEWQIVTLPYPLLLQRSAREALNSSVKGHVIIIDEAHNLMDAISNIHSVTVTLSQLQTSLSQLTIYGRKFKTRLKGKNRSYVAQVIRLLSSIAAHLRSLLESGKAPEGPVLISELMSGKGVDQINPYKLSRYLQESKLARKVDGYVEFTRDPSDKQASRSPTVPVLFHIQGFLLSLMNPSAEGRLFYSKEQGDIQLKYMLLDPTNQFRELVEDARAIILAGGTMSPMTDYMNHLFSYVPASRLDTFSYGHVIPPENLIAHTLVRGVQGSEFDFTYDARDSEKMIMDLGRTIATLCHVIPDGVVAFFPSYDYLGRVLNIWKKPMLGEQGQTVYNLIGQKKPILSESRDMTVTTEELLHTYANTVDSGRGALLLSVVGGKLSEGINFSDKLGRGVLIVGLPFPNIRSAVWQAKIQYIEQKTHQQATGSEASRQLAAKAAGRDFYENSCMRAVNQCIGRAIRHRNDYAAIVLVDRRYEKPGIQAKLPAWIKQSMVGSSVQRPAGATVQSLAKFFASKST</sequence>
<accession>A2QY22</accession>
<organism>
    <name type="scientific">Aspergillus niger (strain ATCC MYA-4892 / CBS 513.88 / FGSC A1513)</name>
    <dbReference type="NCBI Taxonomy" id="425011"/>
    <lineage>
        <taxon>Eukaryota</taxon>
        <taxon>Fungi</taxon>
        <taxon>Dikarya</taxon>
        <taxon>Ascomycota</taxon>
        <taxon>Pezizomycotina</taxon>
        <taxon>Eurotiomycetes</taxon>
        <taxon>Eurotiomycetidae</taxon>
        <taxon>Eurotiales</taxon>
        <taxon>Aspergillaceae</taxon>
        <taxon>Aspergillus</taxon>
        <taxon>Aspergillus subgen. Circumdati</taxon>
    </lineage>
</organism>
<feature type="chain" id="PRO_0000351004" description="ATP-dependent DNA helicase chl1">
    <location>
        <begin position="1"/>
        <end position="874"/>
    </location>
</feature>
<feature type="domain" description="Helicase ATP-binding" evidence="4">
    <location>
        <begin position="4"/>
        <end position="444"/>
    </location>
</feature>
<feature type="region of interest" description="Disordered" evidence="5">
    <location>
        <begin position="92"/>
        <end position="143"/>
    </location>
</feature>
<feature type="region of interest" description="Disordered" evidence="5">
    <location>
        <begin position="151"/>
        <end position="170"/>
    </location>
</feature>
<feature type="short sequence motif" description="DEAH box">
    <location>
        <begin position="392"/>
        <end position="395"/>
    </location>
</feature>
<feature type="compositionally biased region" description="Basic and acidic residues" evidence="5">
    <location>
        <begin position="92"/>
        <end position="115"/>
    </location>
</feature>
<feature type="compositionally biased region" description="Basic and acidic residues" evidence="5">
    <location>
        <begin position="156"/>
        <end position="167"/>
    </location>
</feature>
<feature type="binding site" evidence="4">
    <location>
        <begin position="39"/>
        <end position="46"/>
    </location>
    <ligand>
        <name>ATP</name>
        <dbReference type="ChEBI" id="CHEBI:30616"/>
    </ligand>
</feature>
<feature type="binding site" evidence="1">
    <location>
        <position position="260"/>
    </location>
    <ligand>
        <name>[4Fe-4S] cluster</name>
        <dbReference type="ChEBI" id="CHEBI:49883"/>
    </ligand>
</feature>
<feature type="binding site" evidence="1">
    <location>
        <position position="278"/>
    </location>
    <ligand>
        <name>[4Fe-4S] cluster</name>
        <dbReference type="ChEBI" id="CHEBI:49883"/>
    </ligand>
</feature>
<feature type="binding site" evidence="1">
    <location>
        <position position="292"/>
    </location>
    <ligand>
        <name>[4Fe-4S] cluster</name>
        <dbReference type="ChEBI" id="CHEBI:49883"/>
    </ligand>
</feature>
<feature type="binding site" evidence="1">
    <location>
        <position position="331"/>
    </location>
    <ligand>
        <name>[4Fe-4S] cluster</name>
        <dbReference type="ChEBI" id="CHEBI:49883"/>
    </ligand>
</feature>
<comment type="function">
    <text evidence="2">ATP-dependent DNA helicase important for chromosome transmission and normal cell cycle progression in G(2)/M (By similarity). May have a role in changing DNA topology to allow the loading of proteins involved in maintaining sister chromatid cohesion in the vicinity of the centromeres (By similarity). Has a specific role in chromosome segregation during meiosis II (By similarity).</text>
</comment>
<comment type="catalytic activity">
    <reaction evidence="3">
        <text>Couples ATP hydrolysis with the unwinding of duplex DNA at the replication fork by translocating in the 5'-3' direction. This creates two antiparallel DNA single strands (ssDNA). The leading ssDNA polymer is the template for DNA polymerase III holoenzyme which synthesizes a continuous strand.</text>
        <dbReference type="EC" id="5.6.2.3"/>
    </reaction>
</comment>
<comment type="catalytic activity">
    <reaction evidence="3">
        <text>ATP + H2O = ADP + phosphate + H(+)</text>
        <dbReference type="Rhea" id="RHEA:13065"/>
        <dbReference type="ChEBI" id="CHEBI:15377"/>
        <dbReference type="ChEBI" id="CHEBI:15378"/>
        <dbReference type="ChEBI" id="CHEBI:30616"/>
        <dbReference type="ChEBI" id="CHEBI:43474"/>
        <dbReference type="ChEBI" id="CHEBI:456216"/>
        <dbReference type="EC" id="5.6.2.3"/>
    </reaction>
</comment>
<comment type="cofactor">
    <cofactor evidence="1">
        <name>[4Fe-4S] cluster</name>
        <dbReference type="ChEBI" id="CHEBI:49883"/>
    </cofactor>
    <text evidence="1">Binds 1 [4Fe-4S] cluster.</text>
</comment>
<comment type="subcellular location">
    <subcellularLocation>
        <location evidence="2">Nucleus</location>
    </subcellularLocation>
</comment>
<comment type="similarity">
    <text evidence="6">Belongs to the DEAD box helicase family. DEAH subfamily. DDX11/CHL1 sub-subfamily.</text>
</comment>
<dbReference type="EC" id="5.6.2.3" evidence="3"/>
<dbReference type="EMBL" id="AM270256">
    <property type="protein sequence ID" value="CAK40902.1"/>
    <property type="molecule type" value="Genomic_DNA"/>
</dbReference>
<dbReference type="EnsemblFungi" id="CAK40902">
    <property type="protein sequence ID" value="CAK40902"/>
    <property type="gene ID" value="An11g11040"/>
</dbReference>
<dbReference type="VEuPathDB" id="FungiDB:An11g11040"/>
<dbReference type="HOGENOM" id="CLU_006515_2_0_1"/>
<dbReference type="Proteomes" id="UP000006706">
    <property type="component" value="Chromosome 7R"/>
</dbReference>
<dbReference type="GO" id="GO:0000785">
    <property type="term" value="C:chromatin"/>
    <property type="evidence" value="ECO:0007669"/>
    <property type="project" value="EnsemblFungi"/>
</dbReference>
<dbReference type="GO" id="GO:0005634">
    <property type="term" value="C:nucleus"/>
    <property type="evidence" value="ECO:0007669"/>
    <property type="project" value="UniProtKB-SubCell"/>
</dbReference>
<dbReference type="GO" id="GO:0005524">
    <property type="term" value="F:ATP binding"/>
    <property type="evidence" value="ECO:0007669"/>
    <property type="project" value="UniProtKB-KW"/>
</dbReference>
<dbReference type="GO" id="GO:0016887">
    <property type="term" value="F:ATP hydrolysis activity"/>
    <property type="evidence" value="ECO:0007669"/>
    <property type="project" value="RHEA"/>
</dbReference>
<dbReference type="GO" id="GO:0003677">
    <property type="term" value="F:DNA binding"/>
    <property type="evidence" value="ECO:0007669"/>
    <property type="project" value="UniProtKB-KW"/>
</dbReference>
<dbReference type="GO" id="GO:0003678">
    <property type="term" value="F:DNA helicase activity"/>
    <property type="evidence" value="ECO:0007669"/>
    <property type="project" value="EnsemblFungi"/>
</dbReference>
<dbReference type="GO" id="GO:0051536">
    <property type="term" value="F:iron-sulfur cluster binding"/>
    <property type="evidence" value="ECO:0007669"/>
    <property type="project" value="UniProtKB-KW"/>
</dbReference>
<dbReference type="GO" id="GO:0046872">
    <property type="term" value="F:metal ion binding"/>
    <property type="evidence" value="ECO:0007669"/>
    <property type="project" value="UniProtKB-KW"/>
</dbReference>
<dbReference type="GO" id="GO:0034085">
    <property type="term" value="P:establishment of sister chromatid cohesion"/>
    <property type="evidence" value="ECO:0007669"/>
    <property type="project" value="EnsemblFungi"/>
</dbReference>
<dbReference type="GO" id="GO:0036297">
    <property type="term" value="P:interstrand cross-link repair"/>
    <property type="evidence" value="ECO:0007669"/>
    <property type="project" value="EnsemblFungi"/>
</dbReference>
<dbReference type="GO" id="GO:0031571">
    <property type="term" value="P:mitotic G1 DNA damage checkpoint signaling"/>
    <property type="evidence" value="ECO:0007669"/>
    <property type="project" value="EnsemblFungi"/>
</dbReference>
<dbReference type="GO" id="GO:0007064">
    <property type="term" value="P:mitotic sister chromatid cohesion"/>
    <property type="evidence" value="ECO:0007669"/>
    <property type="project" value="EnsemblFungi"/>
</dbReference>
<dbReference type="CDD" id="cd18788">
    <property type="entry name" value="SF2_C_XPD"/>
    <property type="match status" value="1"/>
</dbReference>
<dbReference type="FunFam" id="3.40.50.300:FF:001372">
    <property type="entry name" value="ATP-dependent DNA helicase chl1"/>
    <property type="match status" value="1"/>
</dbReference>
<dbReference type="FunFam" id="3.40.50.300:FF:002774">
    <property type="entry name" value="ATP-dependent DNA helicase chl1"/>
    <property type="match status" value="1"/>
</dbReference>
<dbReference type="Gene3D" id="3.40.50.300">
    <property type="entry name" value="P-loop containing nucleotide triphosphate hydrolases"/>
    <property type="match status" value="3"/>
</dbReference>
<dbReference type="InterPro" id="IPR006555">
    <property type="entry name" value="ATP-dep_Helicase_C"/>
</dbReference>
<dbReference type="InterPro" id="IPR045028">
    <property type="entry name" value="DinG/Rad3-like"/>
</dbReference>
<dbReference type="InterPro" id="IPR002464">
    <property type="entry name" value="DNA/RNA_helicase_DEAH_CS"/>
</dbReference>
<dbReference type="InterPro" id="IPR014013">
    <property type="entry name" value="Helic_SF1/SF2_ATP-bd_DinG/Rad3"/>
</dbReference>
<dbReference type="InterPro" id="IPR006554">
    <property type="entry name" value="Helicase-like_DEXD_c2"/>
</dbReference>
<dbReference type="InterPro" id="IPR027417">
    <property type="entry name" value="P-loop_NTPase"/>
</dbReference>
<dbReference type="InterPro" id="IPR010614">
    <property type="entry name" value="RAD3-like_helicase_DEAD"/>
</dbReference>
<dbReference type="InterPro" id="IPR013020">
    <property type="entry name" value="Rad3/Chl1-like"/>
</dbReference>
<dbReference type="NCBIfam" id="TIGR00604">
    <property type="entry name" value="rad3"/>
    <property type="match status" value="1"/>
</dbReference>
<dbReference type="PANTHER" id="PTHR11472:SF41">
    <property type="entry name" value="ATP-DEPENDENT DNA HELICASE DDX11-RELATED"/>
    <property type="match status" value="1"/>
</dbReference>
<dbReference type="PANTHER" id="PTHR11472">
    <property type="entry name" value="DNA REPAIR DEAD HELICASE RAD3/XP-D SUBFAMILY MEMBER"/>
    <property type="match status" value="1"/>
</dbReference>
<dbReference type="Pfam" id="PF06733">
    <property type="entry name" value="DEAD_2"/>
    <property type="match status" value="2"/>
</dbReference>
<dbReference type="Pfam" id="PF13307">
    <property type="entry name" value="Helicase_C_2"/>
    <property type="match status" value="1"/>
</dbReference>
<dbReference type="SMART" id="SM00488">
    <property type="entry name" value="DEXDc2"/>
    <property type="match status" value="1"/>
</dbReference>
<dbReference type="SMART" id="SM00491">
    <property type="entry name" value="HELICc2"/>
    <property type="match status" value="1"/>
</dbReference>
<dbReference type="SUPFAM" id="SSF52540">
    <property type="entry name" value="P-loop containing nucleoside triphosphate hydrolases"/>
    <property type="match status" value="1"/>
</dbReference>
<dbReference type="PROSITE" id="PS00690">
    <property type="entry name" value="DEAH_ATP_HELICASE"/>
    <property type="match status" value="1"/>
</dbReference>
<dbReference type="PROSITE" id="PS51193">
    <property type="entry name" value="HELICASE_ATP_BIND_2"/>
    <property type="match status" value="1"/>
</dbReference>
<protein>
    <recommendedName>
        <fullName evidence="2">ATP-dependent DNA helicase chl1</fullName>
        <ecNumber evidence="3">5.6.2.3</ecNumber>
    </recommendedName>
    <alternativeName>
        <fullName evidence="2">Chromosome loss protein 1</fullName>
    </alternativeName>
    <alternativeName>
        <fullName evidence="6">DNA 5'-3' helicase chl1</fullName>
    </alternativeName>
</protein>
<proteinExistence type="inferred from homology"/>
<name>CHL1_ASPNC</name>